<gene>
    <name evidence="1" type="primary">htpG</name>
    <name type="ordered locus">APL_0987</name>
</gene>
<comment type="function">
    <text evidence="1">Molecular chaperone. Has ATPase activity.</text>
</comment>
<comment type="subunit">
    <text evidence="1">Homodimer.</text>
</comment>
<comment type="subcellular location">
    <subcellularLocation>
        <location evidence="1">Cytoplasm</location>
    </subcellularLocation>
</comment>
<comment type="similarity">
    <text evidence="1">Belongs to the heat shock protein 90 family.</text>
</comment>
<protein>
    <recommendedName>
        <fullName evidence="1">Chaperone protein HtpG</fullName>
    </recommendedName>
    <alternativeName>
        <fullName evidence="1">Heat shock protein HtpG</fullName>
    </alternativeName>
    <alternativeName>
        <fullName evidence="1">High temperature protein G</fullName>
    </alternativeName>
</protein>
<feature type="chain" id="PRO_1000072453" description="Chaperone protein HtpG">
    <location>
        <begin position="1"/>
        <end position="625"/>
    </location>
</feature>
<feature type="region of interest" description="A; substrate-binding" evidence="1">
    <location>
        <begin position="1"/>
        <end position="337"/>
    </location>
</feature>
<feature type="region of interest" description="B" evidence="1">
    <location>
        <begin position="338"/>
        <end position="554"/>
    </location>
</feature>
<feature type="region of interest" description="C" evidence="1">
    <location>
        <begin position="555"/>
        <end position="625"/>
    </location>
</feature>
<accession>A3N0Z5</accession>
<reference key="1">
    <citation type="journal article" date="2008" name="J. Bacteriol.">
        <title>The complete genome sequence of Actinobacillus pleuropneumoniae L20 (serotype 5b).</title>
        <authorList>
            <person name="Foote S.J."/>
            <person name="Bosse J.T."/>
            <person name="Bouevitch A.B."/>
            <person name="Langford P.R."/>
            <person name="Young N.M."/>
            <person name="Nash J.H.E."/>
        </authorList>
    </citation>
    <scope>NUCLEOTIDE SEQUENCE [LARGE SCALE GENOMIC DNA]</scope>
    <source>
        <strain>L20</strain>
    </source>
</reference>
<organism>
    <name type="scientific">Actinobacillus pleuropneumoniae serotype 5b (strain L20)</name>
    <dbReference type="NCBI Taxonomy" id="416269"/>
    <lineage>
        <taxon>Bacteria</taxon>
        <taxon>Pseudomonadati</taxon>
        <taxon>Pseudomonadota</taxon>
        <taxon>Gammaproteobacteria</taxon>
        <taxon>Pasteurellales</taxon>
        <taxon>Pasteurellaceae</taxon>
        <taxon>Actinobacillus</taxon>
    </lineage>
</organism>
<sequence>MSTNQETRGFQSEVKQLLQLMIHSLYSNKEIFLRELISNASDAADKLRFKALSNPALYEGDGELRVRVSFDETLGTLTISDNGIGMNREQVIDHLGTIAKSGTKEFLNSLGTDQAKDSQLIGQFGVGFYSAFIVADKVTVKTRAAGETQAVLWESAGEGDYTVADIEKATRGTDVILHLREEEKEFLSEWRLREIIGKYSDHIGLPVEIQTTEYNEEGKASGQKWEKINKAQALWTRSKNEISDEEYQEFYKHLSHDYNDSLIWAHNKVEGKQEYTSLLYVPAKAPWDLFNRDQKHGLKLYVQRVFIMDDAEVFMPNYLRFMRGLLDTNDLPLNVSREILQENKITASLRAALTKRALQLLEKLAKDDQAKYQTFWNEFGLVLKEGVGEDFANKQQIASLFRFASTQTDSSEQTVSLADYVGRMKEGQKAIYFLTADSYVAAKNSPHLELFNKKGIEVLLLSDRIDEWVVGHLTEFDGKPLQSITKSDLDLGDLADKEQEESQKAQQAEFGSFLERAQSYFGERVKKVVLTHRLTDTPAVVSTDNDEMTTQMAKLFAAMGQKAPEVKYTFELNPDHRMVKKIADLTDETKFNDWIELLFEQALLAERGSLENPAAFIKRMNKLLG</sequence>
<evidence type="ECO:0000255" key="1">
    <source>
        <dbReference type="HAMAP-Rule" id="MF_00505"/>
    </source>
</evidence>
<proteinExistence type="inferred from homology"/>
<keyword id="KW-0067">ATP-binding</keyword>
<keyword id="KW-0143">Chaperone</keyword>
<keyword id="KW-0963">Cytoplasm</keyword>
<keyword id="KW-0547">Nucleotide-binding</keyword>
<keyword id="KW-1185">Reference proteome</keyword>
<keyword id="KW-0346">Stress response</keyword>
<name>HTPG_ACTP2</name>
<dbReference type="EMBL" id="CP000569">
    <property type="protein sequence ID" value="ABN74081.1"/>
    <property type="molecule type" value="Genomic_DNA"/>
</dbReference>
<dbReference type="RefSeq" id="WP_009874843.1">
    <property type="nucleotide sequence ID" value="NC_009053.1"/>
</dbReference>
<dbReference type="SMR" id="A3N0Z5"/>
<dbReference type="STRING" id="416269.APL_0987"/>
<dbReference type="EnsemblBacteria" id="ABN74081">
    <property type="protein sequence ID" value="ABN74081"/>
    <property type="gene ID" value="APL_0987"/>
</dbReference>
<dbReference type="KEGG" id="apl:APL_0987"/>
<dbReference type="PATRIC" id="fig|416269.6.peg.1034"/>
<dbReference type="eggNOG" id="COG0326">
    <property type="taxonomic scope" value="Bacteria"/>
</dbReference>
<dbReference type="HOGENOM" id="CLU_006684_3_0_6"/>
<dbReference type="Proteomes" id="UP000001432">
    <property type="component" value="Chromosome"/>
</dbReference>
<dbReference type="GO" id="GO:0005737">
    <property type="term" value="C:cytoplasm"/>
    <property type="evidence" value="ECO:0007669"/>
    <property type="project" value="UniProtKB-SubCell"/>
</dbReference>
<dbReference type="GO" id="GO:0005524">
    <property type="term" value="F:ATP binding"/>
    <property type="evidence" value="ECO:0007669"/>
    <property type="project" value="UniProtKB-UniRule"/>
</dbReference>
<dbReference type="GO" id="GO:0016887">
    <property type="term" value="F:ATP hydrolysis activity"/>
    <property type="evidence" value="ECO:0007669"/>
    <property type="project" value="InterPro"/>
</dbReference>
<dbReference type="GO" id="GO:0140662">
    <property type="term" value="F:ATP-dependent protein folding chaperone"/>
    <property type="evidence" value="ECO:0007669"/>
    <property type="project" value="InterPro"/>
</dbReference>
<dbReference type="GO" id="GO:0051082">
    <property type="term" value="F:unfolded protein binding"/>
    <property type="evidence" value="ECO:0007669"/>
    <property type="project" value="UniProtKB-UniRule"/>
</dbReference>
<dbReference type="CDD" id="cd16927">
    <property type="entry name" value="HATPase_Hsp90-like"/>
    <property type="match status" value="1"/>
</dbReference>
<dbReference type="FunFam" id="3.30.230.80:FF:000002">
    <property type="entry name" value="Molecular chaperone HtpG"/>
    <property type="match status" value="1"/>
</dbReference>
<dbReference type="FunFam" id="3.30.565.10:FF:000009">
    <property type="entry name" value="Molecular chaperone HtpG"/>
    <property type="match status" value="1"/>
</dbReference>
<dbReference type="FunFam" id="3.40.50.11260:FF:000002">
    <property type="entry name" value="Molecular chaperone HtpG"/>
    <property type="match status" value="1"/>
</dbReference>
<dbReference type="Gene3D" id="3.30.230.80">
    <property type="match status" value="1"/>
</dbReference>
<dbReference type="Gene3D" id="3.40.50.11260">
    <property type="match status" value="1"/>
</dbReference>
<dbReference type="Gene3D" id="1.20.120.790">
    <property type="entry name" value="Heat shock protein 90, C-terminal domain"/>
    <property type="match status" value="1"/>
</dbReference>
<dbReference type="Gene3D" id="3.30.565.10">
    <property type="entry name" value="Histidine kinase-like ATPase, C-terminal domain"/>
    <property type="match status" value="1"/>
</dbReference>
<dbReference type="HAMAP" id="MF_00505">
    <property type="entry name" value="HSP90"/>
    <property type="match status" value="1"/>
</dbReference>
<dbReference type="InterPro" id="IPR036890">
    <property type="entry name" value="HATPase_C_sf"/>
</dbReference>
<dbReference type="InterPro" id="IPR019805">
    <property type="entry name" value="Heat_shock_protein_90_CS"/>
</dbReference>
<dbReference type="InterPro" id="IPR037196">
    <property type="entry name" value="HSP90_C"/>
</dbReference>
<dbReference type="InterPro" id="IPR001404">
    <property type="entry name" value="Hsp90_fam"/>
</dbReference>
<dbReference type="InterPro" id="IPR020575">
    <property type="entry name" value="Hsp90_N"/>
</dbReference>
<dbReference type="InterPro" id="IPR020568">
    <property type="entry name" value="Ribosomal_Su5_D2-typ_SF"/>
</dbReference>
<dbReference type="NCBIfam" id="NF003555">
    <property type="entry name" value="PRK05218.1"/>
    <property type="match status" value="1"/>
</dbReference>
<dbReference type="PANTHER" id="PTHR11528">
    <property type="entry name" value="HEAT SHOCK PROTEIN 90 FAMILY MEMBER"/>
    <property type="match status" value="1"/>
</dbReference>
<dbReference type="Pfam" id="PF13589">
    <property type="entry name" value="HATPase_c_3"/>
    <property type="match status" value="1"/>
</dbReference>
<dbReference type="Pfam" id="PF00183">
    <property type="entry name" value="HSP90"/>
    <property type="match status" value="1"/>
</dbReference>
<dbReference type="PIRSF" id="PIRSF002583">
    <property type="entry name" value="Hsp90"/>
    <property type="match status" value="1"/>
</dbReference>
<dbReference type="PRINTS" id="PR00775">
    <property type="entry name" value="HEATSHOCK90"/>
</dbReference>
<dbReference type="SMART" id="SM00387">
    <property type="entry name" value="HATPase_c"/>
    <property type="match status" value="1"/>
</dbReference>
<dbReference type="SUPFAM" id="SSF55874">
    <property type="entry name" value="ATPase domain of HSP90 chaperone/DNA topoisomerase II/histidine kinase"/>
    <property type="match status" value="1"/>
</dbReference>
<dbReference type="SUPFAM" id="SSF110942">
    <property type="entry name" value="HSP90 C-terminal domain"/>
    <property type="match status" value="1"/>
</dbReference>
<dbReference type="SUPFAM" id="SSF54211">
    <property type="entry name" value="Ribosomal protein S5 domain 2-like"/>
    <property type="match status" value="1"/>
</dbReference>
<dbReference type="PROSITE" id="PS00298">
    <property type="entry name" value="HSP90"/>
    <property type="match status" value="1"/>
</dbReference>